<feature type="chain" id="PRO_0000255147" description="Cytochrome b">
    <location>
        <begin position="1"/>
        <end position="380"/>
    </location>
</feature>
<feature type="transmembrane region" description="Helical" evidence="2">
    <location>
        <begin position="33"/>
        <end position="53"/>
    </location>
</feature>
<feature type="transmembrane region" description="Helical" evidence="2">
    <location>
        <begin position="77"/>
        <end position="98"/>
    </location>
</feature>
<feature type="transmembrane region" description="Helical" evidence="2">
    <location>
        <begin position="113"/>
        <end position="133"/>
    </location>
</feature>
<feature type="transmembrane region" description="Helical" evidence="2">
    <location>
        <begin position="178"/>
        <end position="198"/>
    </location>
</feature>
<feature type="transmembrane region" description="Helical" evidence="2">
    <location>
        <begin position="226"/>
        <end position="246"/>
    </location>
</feature>
<feature type="transmembrane region" description="Helical" evidence="2">
    <location>
        <begin position="288"/>
        <end position="308"/>
    </location>
</feature>
<feature type="transmembrane region" description="Helical" evidence="2">
    <location>
        <begin position="320"/>
        <end position="340"/>
    </location>
</feature>
<feature type="transmembrane region" description="Helical" evidence="2">
    <location>
        <begin position="347"/>
        <end position="367"/>
    </location>
</feature>
<feature type="binding site" description="axial binding residue" evidence="2">
    <location>
        <position position="83"/>
    </location>
    <ligand>
        <name>heme b</name>
        <dbReference type="ChEBI" id="CHEBI:60344"/>
        <label>b562</label>
    </ligand>
    <ligandPart>
        <name>Fe</name>
        <dbReference type="ChEBI" id="CHEBI:18248"/>
    </ligandPart>
</feature>
<feature type="binding site" description="axial binding residue" evidence="2">
    <location>
        <position position="97"/>
    </location>
    <ligand>
        <name>heme b</name>
        <dbReference type="ChEBI" id="CHEBI:60344"/>
        <label>b566</label>
    </ligand>
    <ligandPart>
        <name>Fe</name>
        <dbReference type="ChEBI" id="CHEBI:18248"/>
    </ligandPart>
</feature>
<feature type="binding site" description="axial binding residue" evidence="2">
    <location>
        <position position="182"/>
    </location>
    <ligand>
        <name>heme b</name>
        <dbReference type="ChEBI" id="CHEBI:60344"/>
        <label>b562</label>
    </ligand>
    <ligandPart>
        <name>Fe</name>
        <dbReference type="ChEBI" id="CHEBI:18248"/>
    </ligandPart>
</feature>
<feature type="binding site" description="axial binding residue" evidence="2">
    <location>
        <position position="196"/>
    </location>
    <ligand>
        <name>heme b</name>
        <dbReference type="ChEBI" id="CHEBI:60344"/>
        <label>b566</label>
    </ligand>
    <ligandPart>
        <name>Fe</name>
        <dbReference type="ChEBI" id="CHEBI:18248"/>
    </ligandPart>
</feature>
<feature type="binding site" evidence="2">
    <location>
        <position position="201"/>
    </location>
    <ligand>
        <name>a ubiquinone</name>
        <dbReference type="ChEBI" id="CHEBI:16389"/>
    </ligand>
</feature>
<comment type="function">
    <text evidence="2">Component of the ubiquinol-cytochrome c reductase complex (complex III or cytochrome b-c1 complex) that is part of the mitochondrial respiratory chain. The b-c1 complex mediates electron transfer from ubiquinol to cytochrome c. Contributes to the generation of a proton gradient across the mitochondrial membrane that is then used for ATP synthesis.</text>
</comment>
<comment type="cofactor">
    <cofactor evidence="2">
        <name>heme b</name>
        <dbReference type="ChEBI" id="CHEBI:60344"/>
    </cofactor>
    <text evidence="2">Binds 2 heme b groups non-covalently.</text>
</comment>
<comment type="subunit">
    <text evidence="2">The cytochrome bc1 complex contains 11 subunits: 3 respiratory subunits (MT-CYB, CYC1 and UQCRFS1), 2 core proteins (UQCRC1 and UQCRC2) and 6 low-molecular weight proteins (UQCRH/QCR6, UQCRB/QCR7, UQCRQ/QCR8, UQCR10/QCR9, UQCR11/QCR10 and a cleavage product of UQCRFS1). This cytochrome bc1 complex then forms a dimer.</text>
</comment>
<comment type="subcellular location">
    <subcellularLocation>
        <location evidence="2">Mitochondrion inner membrane</location>
        <topology evidence="2">Multi-pass membrane protein</topology>
    </subcellularLocation>
</comment>
<comment type="miscellaneous">
    <text evidence="1">Heme 1 (or BL or b562) is low-potential and absorbs at about 562 nm, and heme 2 (or BH or b566) is high-potential and absorbs at about 566 nm.</text>
</comment>
<comment type="similarity">
    <text evidence="3 4">Belongs to the cytochrome b family.</text>
</comment>
<comment type="caution">
    <text evidence="2">The full-length protein contains only eight transmembrane helices, not nine as predicted by bioinformatics tools.</text>
</comment>
<protein>
    <recommendedName>
        <fullName>Cytochrome b</fullName>
    </recommendedName>
    <alternativeName>
        <fullName>Complex III subunit 3</fullName>
    </alternativeName>
    <alternativeName>
        <fullName>Complex III subunit III</fullName>
    </alternativeName>
    <alternativeName>
        <fullName>Cytochrome b-c1 complex subunit 3</fullName>
    </alternativeName>
    <alternativeName>
        <fullName>Ubiquinol-cytochrome-c reductase complex cytochrome b subunit</fullName>
    </alternativeName>
</protein>
<name>CYB_THOOR</name>
<organism>
    <name type="scientific">Thomasomys oreas</name>
    <name type="common">Montane oldfield mouse</name>
    <dbReference type="NCBI Taxonomy" id="89112"/>
    <lineage>
        <taxon>Eukaryota</taxon>
        <taxon>Metazoa</taxon>
        <taxon>Chordata</taxon>
        <taxon>Craniata</taxon>
        <taxon>Vertebrata</taxon>
        <taxon>Euteleostomi</taxon>
        <taxon>Mammalia</taxon>
        <taxon>Eutheria</taxon>
        <taxon>Euarchontoglires</taxon>
        <taxon>Glires</taxon>
        <taxon>Rodentia</taxon>
        <taxon>Myomorpha</taxon>
        <taxon>Muroidea</taxon>
        <taxon>Cricetidae</taxon>
        <taxon>Sigmodontinae</taxon>
        <taxon>Thomasomys</taxon>
    </lineage>
</organism>
<gene>
    <name type="primary">MT-CYB</name>
    <name type="synonym">COB</name>
    <name type="synonym">CYTB</name>
    <name type="synonym">MTCYB</name>
</gene>
<proteinExistence type="inferred from homology"/>
<dbReference type="EMBL" id="AF108677">
    <property type="protein sequence ID" value="AAD45459.1"/>
    <property type="molecule type" value="Genomic_DNA"/>
</dbReference>
<dbReference type="SMR" id="Q9XNW7"/>
<dbReference type="GO" id="GO:0005743">
    <property type="term" value="C:mitochondrial inner membrane"/>
    <property type="evidence" value="ECO:0007669"/>
    <property type="project" value="UniProtKB-SubCell"/>
</dbReference>
<dbReference type="GO" id="GO:0045275">
    <property type="term" value="C:respiratory chain complex III"/>
    <property type="evidence" value="ECO:0007669"/>
    <property type="project" value="InterPro"/>
</dbReference>
<dbReference type="GO" id="GO:0046872">
    <property type="term" value="F:metal ion binding"/>
    <property type="evidence" value="ECO:0007669"/>
    <property type="project" value="UniProtKB-KW"/>
</dbReference>
<dbReference type="GO" id="GO:0008121">
    <property type="term" value="F:ubiquinol-cytochrome-c reductase activity"/>
    <property type="evidence" value="ECO:0007669"/>
    <property type="project" value="InterPro"/>
</dbReference>
<dbReference type="GO" id="GO:0006122">
    <property type="term" value="P:mitochondrial electron transport, ubiquinol to cytochrome c"/>
    <property type="evidence" value="ECO:0007669"/>
    <property type="project" value="TreeGrafter"/>
</dbReference>
<dbReference type="CDD" id="cd00290">
    <property type="entry name" value="cytochrome_b_C"/>
    <property type="match status" value="1"/>
</dbReference>
<dbReference type="CDD" id="cd00284">
    <property type="entry name" value="Cytochrome_b_N"/>
    <property type="match status" value="1"/>
</dbReference>
<dbReference type="FunFam" id="1.20.810.10:FF:000002">
    <property type="entry name" value="Cytochrome b"/>
    <property type="match status" value="1"/>
</dbReference>
<dbReference type="Gene3D" id="1.20.810.10">
    <property type="entry name" value="Cytochrome Bc1 Complex, Chain C"/>
    <property type="match status" value="1"/>
</dbReference>
<dbReference type="InterPro" id="IPR005798">
    <property type="entry name" value="Cyt_b/b6_C"/>
</dbReference>
<dbReference type="InterPro" id="IPR036150">
    <property type="entry name" value="Cyt_b/b6_C_sf"/>
</dbReference>
<dbReference type="InterPro" id="IPR005797">
    <property type="entry name" value="Cyt_b/b6_N"/>
</dbReference>
<dbReference type="InterPro" id="IPR027387">
    <property type="entry name" value="Cytb/b6-like_sf"/>
</dbReference>
<dbReference type="InterPro" id="IPR030689">
    <property type="entry name" value="Cytochrome_b"/>
</dbReference>
<dbReference type="InterPro" id="IPR048260">
    <property type="entry name" value="Cytochrome_b_C_euk/bac"/>
</dbReference>
<dbReference type="InterPro" id="IPR048259">
    <property type="entry name" value="Cytochrome_b_N_euk/bac"/>
</dbReference>
<dbReference type="InterPro" id="IPR016174">
    <property type="entry name" value="Di-haem_cyt_TM"/>
</dbReference>
<dbReference type="PANTHER" id="PTHR19271">
    <property type="entry name" value="CYTOCHROME B"/>
    <property type="match status" value="1"/>
</dbReference>
<dbReference type="PANTHER" id="PTHR19271:SF16">
    <property type="entry name" value="CYTOCHROME B"/>
    <property type="match status" value="1"/>
</dbReference>
<dbReference type="Pfam" id="PF00032">
    <property type="entry name" value="Cytochrom_B_C"/>
    <property type="match status" value="1"/>
</dbReference>
<dbReference type="Pfam" id="PF00033">
    <property type="entry name" value="Cytochrome_B"/>
    <property type="match status" value="1"/>
</dbReference>
<dbReference type="PIRSF" id="PIRSF038885">
    <property type="entry name" value="COB"/>
    <property type="match status" value="1"/>
</dbReference>
<dbReference type="SUPFAM" id="SSF81648">
    <property type="entry name" value="a domain/subunit of cytochrome bc1 complex (Ubiquinol-cytochrome c reductase)"/>
    <property type="match status" value="1"/>
</dbReference>
<dbReference type="SUPFAM" id="SSF81342">
    <property type="entry name" value="Transmembrane di-heme cytochromes"/>
    <property type="match status" value="1"/>
</dbReference>
<dbReference type="PROSITE" id="PS51003">
    <property type="entry name" value="CYTB_CTER"/>
    <property type="match status" value="1"/>
</dbReference>
<dbReference type="PROSITE" id="PS51002">
    <property type="entry name" value="CYTB_NTER"/>
    <property type="match status" value="1"/>
</dbReference>
<reference key="1">
    <citation type="journal article" date="1999" name="J. Mammal. Evol.">
        <title>Phylogenetic relationships and the radiation of Sigmodontine rodents in South America: evidence from cytochrome b.</title>
        <authorList>
            <person name="Smith M.F."/>
            <person name="Patton J.L."/>
        </authorList>
    </citation>
    <scope>NUCLEOTIDE SEQUENCE [GENOMIC DNA]</scope>
</reference>
<sequence length="380" mass="42927">MTIMRKKHPLLKLVNHSLIDLPAPSNISSWWNFGSLLGICLMIQILTGLFLAMHYTSDTTTAFSSVAHICRDVNYGWLIRYIHANGASMFFICLFIHVGRGIYYGSYMLLETWNIGIILFLTTMATAFVSYVLPWGQMSFWGATVITNLLSAIPYIGNTLVEWIWGGFSVDKATLTRFFAFHFILPFIITALVLVHLLFLHETGSNNPSGLNSNSDKIPFHPYYTIKDLLGILILLMVLMILVLFFPDVLGDPDNYTPANPLNTPAHIKPEWYFLFAYAILRSIPNKLGGVLALILSILILALFPLLNSSKQCGLIYRPISQSLFWIFIANLFILTWIGGQPVEYPFTTIGQISSILYFTIVLVLMPTASMIENKILKFY</sequence>
<accession>Q9XNW7</accession>
<geneLocation type="mitochondrion"/>
<evidence type="ECO:0000250" key="1"/>
<evidence type="ECO:0000250" key="2">
    <source>
        <dbReference type="UniProtKB" id="P00157"/>
    </source>
</evidence>
<evidence type="ECO:0000255" key="3">
    <source>
        <dbReference type="PROSITE-ProRule" id="PRU00967"/>
    </source>
</evidence>
<evidence type="ECO:0000255" key="4">
    <source>
        <dbReference type="PROSITE-ProRule" id="PRU00968"/>
    </source>
</evidence>
<keyword id="KW-0249">Electron transport</keyword>
<keyword id="KW-0349">Heme</keyword>
<keyword id="KW-0408">Iron</keyword>
<keyword id="KW-0472">Membrane</keyword>
<keyword id="KW-0479">Metal-binding</keyword>
<keyword id="KW-0496">Mitochondrion</keyword>
<keyword id="KW-0999">Mitochondrion inner membrane</keyword>
<keyword id="KW-0679">Respiratory chain</keyword>
<keyword id="KW-0812">Transmembrane</keyword>
<keyword id="KW-1133">Transmembrane helix</keyword>
<keyword id="KW-0813">Transport</keyword>
<keyword id="KW-0830">Ubiquinone</keyword>